<keyword id="KW-1185">Reference proteome</keyword>
<name>YR530_MIMIV</name>
<reference key="1">
    <citation type="journal article" date="2004" name="Science">
        <title>The 1.2-megabase genome sequence of Mimivirus.</title>
        <authorList>
            <person name="Raoult D."/>
            <person name="Audic S."/>
            <person name="Robert C."/>
            <person name="Abergel C."/>
            <person name="Renesto P."/>
            <person name="Ogata H."/>
            <person name="La Scola B."/>
            <person name="Susan M."/>
            <person name="Claverie J.-M."/>
        </authorList>
    </citation>
    <scope>NUCLEOTIDE SEQUENCE [LARGE SCALE GENOMIC DNA]</scope>
    <source>
        <strain>Rowbotham-Bradford</strain>
    </source>
</reference>
<accession>Q5UQ92</accession>
<organismHost>
    <name type="scientific">Acanthamoeba polyphaga</name>
    <name type="common">Amoeba</name>
    <dbReference type="NCBI Taxonomy" id="5757"/>
</organismHost>
<proteinExistence type="predicted"/>
<gene>
    <name type="ordered locus">MIMI_R530</name>
</gene>
<dbReference type="EMBL" id="AY653733">
    <property type="protein sequence ID" value="AAV50794.1"/>
    <property type="molecule type" value="Genomic_DNA"/>
</dbReference>
<dbReference type="SMR" id="Q5UQ92"/>
<dbReference type="KEGG" id="vg:9925162"/>
<dbReference type="OrthoDB" id="5394at10239"/>
<dbReference type="Proteomes" id="UP000001134">
    <property type="component" value="Genome"/>
</dbReference>
<dbReference type="Gene3D" id="3.40.50.300">
    <property type="entry name" value="P-loop containing nucleotide triphosphate hydrolases"/>
    <property type="match status" value="2"/>
</dbReference>
<dbReference type="InterPro" id="IPR050534">
    <property type="entry name" value="Coronavir_polyprotein_1ab"/>
</dbReference>
<dbReference type="InterPro" id="IPR027417">
    <property type="entry name" value="P-loop_NTPase"/>
</dbReference>
<dbReference type="InterPro" id="IPR027785">
    <property type="entry name" value="UvrD-like_helicase_C"/>
</dbReference>
<dbReference type="PANTHER" id="PTHR43788">
    <property type="entry name" value="DNA2/NAM7 HELICASE FAMILY MEMBER"/>
    <property type="match status" value="1"/>
</dbReference>
<dbReference type="Pfam" id="PF13245">
    <property type="entry name" value="AAA_19"/>
    <property type="match status" value="1"/>
</dbReference>
<dbReference type="Pfam" id="PF13538">
    <property type="entry name" value="UvrD_C_2"/>
    <property type="match status" value="1"/>
</dbReference>
<dbReference type="SUPFAM" id="SSF52540">
    <property type="entry name" value="P-loop containing nucleoside triphosphate hydrolases"/>
    <property type="match status" value="1"/>
</dbReference>
<organism>
    <name type="scientific">Acanthamoeba polyphaga mimivirus</name>
    <name type="common">APMV</name>
    <dbReference type="NCBI Taxonomy" id="212035"/>
    <lineage>
        <taxon>Viruses</taxon>
        <taxon>Varidnaviria</taxon>
        <taxon>Bamfordvirae</taxon>
        <taxon>Nucleocytoviricota</taxon>
        <taxon>Megaviricetes</taxon>
        <taxon>Imitervirales</taxon>
        <taxon>Mimiviridae</taxon>
        <taxon>Megamimivirinae</taxon>
        <taxon>Mimivirus</taxon>
        <taxon>Mimivirus bradfordmassiliense</taxon>
    </lineage>
</organism>
<sequence>MFNTKQQLTANKLLEFINQNTHKIFYLIGFAGSGKTYTISKITKKFLVDELIENIYYCAPTHKALKVLESYIKSNINASDKDLSNKIKFMTIHKLLEFKPIIQTETGSKVFKSTKESKFLKNISKNLVVIDECSMISQEMVDELNKYINLYPIKIIYMGDPKQLPPVGEVESLIFSTIPNNYQYHIVLDEIMRTNSVDIKAVCSVIRNWNLNDQINQKLIDVFNNSTTRRFRMYHIRNDYNKSSWFKSFIKEIQNNEVPIILTWKNSTSDYYNNIIRKFIHKSEEIDNYMINDYLMFNNYYASPENNESFFTSDMVKIIHTTTVTKILYNWSEQLISKPKTDLDRNYNSLIRKISKLDNEFKINILQVKRIQSDVVSSNNTDVHIIHVITFSDLNRYREMLKNIKEQIESFYKRFRIDTIVSKLWDIYHTKLIEPYAEINFGYSITSHKSQGSTYRSVYVDVKDICSNSNKTEMQKSLYTSAGRASERLGFMIE</sequence>
<protein>
    <recommendedName>
        <fullName>Uncharacterized protein R530</fullName>
    </recommendedName>
</protein>
<feature type="chain" id="PRO_0000248626" description="Uncharacterized protein R530">
    <location>
        <begin position="1"/>
        <end position="494"/>
    </location>
</feature>